<organism>
    <name type="scientific">Synechococcus sp. (strain RCC307)</name>
    <dbReference type="NCBI Taxonomy" id="316278"/>
    <lineage>
        <taxon>Bacteria</taxon>
        <taxon>Bacillati</taxon>
        <taxon>Cyanobacteriota</taxon>
        <taxon>Cyanophyceae</taxon>
        <taxon>Synechococcales</taxon>
        <taxon>Synechococcaceae</taxon>
        <taxon>Synechococcus</taxon>
    </lineage>
</organism>
<keyword id="KW-1185">Reference proteome</keyword>
<keyword id="KW-0687">Ribonucleoprotein</keyword>
<keyword id="KW-0689">Ribosomal protein</keyword>
<keyword id="KW-0694">RNA-binding</keyword>
<keyword id="KW-0699">rRNA-binding</keyword>
<reference key="1">
    <citation type="submission" date="2006-05" db="EMBL/GenBank/DDBJ databases">
        <authorList>
            <consortium name="Genoscope"/>
        </authorList>
    </citation>
    <scope>NUCLEOTIDE SEQUENCE [LARGE SCALE GENOMIC DNA]</scope>
    <source>
        <strain>RCC307</strain>
    </source>
</reference>
<sequence length="202" mass="22907">MSRYRGARLRVTRRLGDLPGLTRKAAKRSYPPGQHGQARRKRSEYAIRLEEKQKLRFNYGVSERQLVRYVKKARAQGGSTGTNLLKLLENRLDNVCFRLGFGPTIPGSRQLVNHGHVTVNGRVVDIASYQCKAGDVIAIREKKPSKKLAETNLEFPGLANIPPHLELEKSKLTAKVVGKCEREWVALEINELLVVEYYSRKV</sequence>
<evidence type="ECO:0000255" key="1">
    <source>
        <dbReference type="HAMAP-Rule" id="MF_01306"/>
    </source>
</evidence>
<evidence type="ECO:0000256" key="2">
    <source>
        <dbReference type="SAM" id="MobiDB-lite"/>
    </source>
</evidence>
<evidence type="ECO:0000305" key="3"/>
<proteinExistence type="inferred from homology"/>
<gene>
    <name evidence="1" type="primary">rpsD</name>
    <name evidence="1" type="synonym">rps4</name>
    <name type="ordered locus">SynRCC307_0621</name>
</gene>
<comment type="function">
    <text evidence="1">One of the primary rRNA binding proteins, it binds directly to 16S rRNA where it nucleates assembly of the body of the 30S subunit.</text>
</comment>
<comment type="function">
    <text evidence="1">With S5 and S12 plays an important role in translational accuracy.</text>
</comment>
<comment type="subunit">
    <text evidence="1">Part of the 30S ribosomal subunit. Contacts protein S5. The interaction surface between S4 and S5 is involved in control of translational fidelity.</text>
</comment>
<comment type="similarity">
    <text evidence="1">Belongs to the universal ribosomal protein uS4 family.</text>
</comment>
<dbReference type="EMBL" id="CT978603">
    <property type="protein sequence ID" value="CAK27524.1"/>
    <property type="molecule type" value="Genomic_DNA"/>
</dbReference>
<dbReference type="SMR" id="A5GRL5"/>
<dbReference type="STRING" id="316278.SynRCC307_0621"/>
<dbReference type="KEGG" id="syr:SynRCC307_0621"/>
<dbReference type="eggNOG" id="COG0522">
    <property type="taxonomic scope" value="Bacteria"/>
</dbReference>
<dbReference type="HOGENOM" id="CLU_092403_0_5_3"/>
<dbReference type="OrthoDB" id="9803672at2"/>
<dbReference type="Proteomes" id="UP000001115">
    <property type="component" value="Chromosome"/>
</dbReference>
<dbReference type="GO" id="GO:0015935">
    <property type="term" value="C:small ribosomal subunit"/>
    <property type="evidence" value="ECO:0007669"/>
    <property type="project" value="InterPro"/>
</dbReference>
<dbReference type="GO" id="GO:0019843">
    <property type="term" value="F:rRNA binding"/>
    <property type="evidence" value="ECO:0007669"/>
    <property type="project" value="UniProtKB-UniRule"/>
</dbReference>
<dbReference type="GO" id="GO:0003735">
    <property type="term" value="F:structural constituent of ribosome"/>
    <property type="evidence" value="ECO:0007669"/>
    <property type="project" value="InterPro"/>
</dbReference>
<dbReference type="GO" id="GO:0042274">
    <property type="term" value="P:ribosomal small subunit biogenesis"/>
    <property type="evidence" value="ECO:0007669"/>
    <property type="project" value="TreeGrafter"/>
</dbReference>
<dbReference type="GO" id="GO:0006412">
    <property type="term" value="P:translation"/>
    <property type="evidence" value="ECO:0007669"/>
    <property type="project" value="UniProtKB-UniRule"/>
</dbReference>
<dbReference type="CDD" id="cd00165">
    <property type="entry name" value="S4"/>
    <property type="match status" value="1"/>
</dbReference>
<dbReference type="FunFam" id="3.10.290.10:FF:000001">
    <property type="entry name" value="30S ribosomal protein S4"/>
    <property type="match status" value="1"/>
</dbReference>
<dbReference type="FunFam" id="1.10.1050.10:FF:000002">
    <property type="entry name" value="30S ribosomal protein S4, chloroplastic"/>
    <property type="match status" value="1"/>
</dbReference>
<dbReference type="Gene3D" id="1.10.1050.10">
    <property type="entry name" value="Ribosomal Protein S4 Delta 41, Chain A, domain 1"/>
    <property type="match status" value="1"/>
</dbReference>
<dbReference type="Gene3D" id="3.10.290.10">
    <property type="entry name" value="RNA-binding S4 domain"/>
    <property type="match status" value="1"/>
</dbReference>
<dbReference type="HAMAP" id="MF_01306_B">
    <property type="entry name" value="Ribosomal_uS4_B"/>
    <property type="match status" value="1"/>
</dbReference>
<dbReference type="InterPro" id="IPR022801">
    <property type="entry name" value="Ribosomal_uS4"/>
</dbReference>
<dbReference type="InterPro" id="IPR005709">
    <property type="entry name" value="Ribosomal_uS4_bac-type"/>
</dbReference>
<dbReference type="InterPro" id="IPR018079">
    <property type="entry name" value="Ribosomal_uS4_CS"/>
</dbReference>
<dbReference type="InterPro" id="IPR001912">
    <property type="entry name" value="Ribosomal_uS4_N"/>
</dbReference>
<dbReference type="InterPro" id="IPR002942">
    <property type="entry name" value="S4_RNA-bd"/>
</dbReference>
<dbReference type="InterPro" id="IPR036986">
    <property type="entry name" value="S4_RNA-bd_sf"/>
</dbReference>
<dbReference type="NCBIfam" id="NF003717">
    <property type="entry name" value="PRK05327.1"/>
    <property type="match status" value="1"/>
</dbReference>
<dbReference type="NCBIfam" id="TIGR01017">
    <property type="entry name" value="rpsD_bact"/>
    <property type="match status" value="1"/>
</dbReference>
<dbReference type="PANTHER" id="PTHR11831">
    <property type="entry name" value="30S 40S RIBOSOMAL PROTEIN"/>
    <property type="match status" value="1"/>
</dbReference>
<dbReference type="PANTHER" id="PTHR11831:SF4">
    <property type="entry name" value="SMALL RIBOSOMAL SUBUNIT PROTEIN US4M"/>
    <property type="match status" value="1"/>
</dbReference>
<dbReference type="Pfam" id="PF00163">
    <property type="entry name" value="Ribosomal_S4"/>
    <property type="match status" value="1"/>
</dbReference>
<dbReference type="Pfam" id="PF01479">
    <property type="entry name" value="S4"/>
    <property type="match status" value="1"/>
</dbReference>
<dbReference type="SMART" id="SM01390">
    <property type="entry name" value="Ribosomal_S4"/>
    <property type="match status" value="1"/>
</dbReference>
<dbReference type="SMART" id="SM00363">
    <property type="entry name" value="S4"/>
    <property type="match status" value="1"/>
</dbReference>
<dbReference type="SUPFAM" id="SSF55174">
    <property type="entry name" value="Alpha-L RNA-binding motif"/>
    <property type="match status" value="1"/>
</dbReference>
<dbReference type="PROSITE" id="PS00632">
    <property type="entry name" value="RIBOSOMAL_S4"/>
    <property type="match status" value="1"/>
</dbReference>
<dbReference type="PROSITE" id="PS50889">
    <property type="entry name" value="S4"/>
    <property type="match status" value="1"/>
</dbReference>
<feature type="chain" id="PRO_0000322344" description="Small ribosomal subunit protein uS4">
    <location>
        <begin position="1"/>
        <end position="202"/>
    </location>
</feature>
<feature type="domain" description="S4 RNA-binding" evidence="1">
    <location>
        <begin position="90"/>
        <end position="152"/>
    </location>
</feature>
<feature type="region of interest" description="Disordered" evidence="2">
    <location>
        <begin position="18"/>
        <end position="42"/>
    </location>
</feature>
<name>RS4_SYNR3</name>
<accession>A5GRL5</accession>
<protein>
    <recommendedName>
        <fullName evidence="1">Small ribosomal subunit protein uS4</fullName>
    </recommendedName>
    <alternativeName>
        <fullName evidence="3">30S ribosomal protein S4</fullName>
    </alternativeName>
</protein>